<gene>
    <name evidence="1" type="primary">mtnA2</name>
    <name type="ordered locus">Tlet_1681</name>
</gene>
<feature type="chain" id="PRO_0000357261" description="Methylthioribose-1-phosphate isomerase 2">
    <location>
        <begin position="1"/>
        <end position="345"/>
    </location>
</feature>
<feature type="active site" description="Proton donor" evidence="1">
    <location>
        <position position="235"/>
    </location>
</feature>
<feature type="binding site" evidence="1">
    <location>
        <begin position="47"/>
        <end position="49"/>
    </location>
    <ligand>
        <name>substrate</name>
    </ligand>
</feature>
<feature type="binding site" evidence="1">
    <location>
        <position position="88"/>
    </location>
    <ligand>
        <name>substrate</name>
    </ligand>
</feature>
<feature type="binding site" evidence="1">
    <location>
        <position position="194"/>
    </location>
    <ligand>
        <name>substrate</name>
    </ligand>
</feature>
<feature type="binding site" evidence="1">
    <location>
        <begin position="245"/>
        <end position="246"/>
    </location>
    <ligand>
        <name>substrate</name>
    </ligand>
</feature>
<feature type="site" description="Transition state stabilizer" evidence="1">
    <location>
        <position position="155"/>
    </location>
</feature>
<sequence>MSTFRSIEWKKDKLVLLDQRYLPEKTLYLELKTVDEVARAIKEMTVRGAPAIGVAAAYGMVLCVQKLSKNDDLIRELQKADDLLRASRPTAVNLFWALDRMKKIWQGFNGSLEDLKMILEKEATDIEREDVEINKQIAKNGVELVPFGAKIIHHCNTGSLATVDYGTALGVIRYAHEIGKKIHVFLDETRPRLQGARLSAWEMKELGIPHTIIVDGASGLVMKKFKIDLALVGADRIAANGDTANKIGTYNLAIVAKYHNVPLYVVAPTSTIDLKTPAGQDIPIEERSADEIRCVGNSQVAPQESPVFNPAFDVTPAELISGIITEKGIVYPPFKENLRKLFESA</sequence>
<reference key="1">
    <citation type="submission" date="2007-08" db="EMBL/GenBank/DDBJ databases">
        <title>Complete sequence of Thermotoga lettingae TMO.</title>
        <authorList>
            <consortium name="US DOE Joint Genome Institute"/>
            <person name="Copeland A."/>
            <person name="Lucas S."/>
            <person name="Lapidus A."/>
            <person name="Barry K."/>
            <person name="Glavina del Rio T."/>
            <person name="Dalin E."/>
            <person name="Tice H."/>
            <person name="Pitluck S."/>
            <person name="Foster B."/>
            <person name="Bruce D."/>
            <person name="Schmutz J."/>
            <person name="Larimer F."/>
            <person name="Land M."/>
            <person name="Hauser L."/>
            <person name="Kyrpides N."/>
            <person name="Mikhailova N."/>
            <person name="Nelson K."/>
            <person name="Gogarten J.P."/>
            <person name="Noll K."/>
            <person name="Richardson P."/>
        </authorList>
    </citation>
    <scope>NUCLEOTIDE SEQUENCE [LARGE SCALE GENOMIC DNA]</scope>
    <source>
        <strain>ATCC BAA-301 / DSM 14385 / NBRC 107922 / TMO</strain>
    </source>
</reference>
<comment type="function">
    <text evidence="1">Catalyzes the interconversion of methylthioribose-1-phosphate (MTR-1-P) into methylthioribulose-1-phosphate (MTRu-1-P).</text>
</comment>
<comment type="catalytic activity">
    <reaction evidence="1">
        <text>5-(methylsulfanyl)-alpha-D-ribose 1-phosphate = 5-(methylsulfanyl)-D-ribulose 1-phosphate</text>
        <dbReference type="Rhea" id="RHEA:19989"/>
        <dbReference type="ChEBI" id="CHEBI:58533"/>
        <dbReference type="ChEBI" id="CHEBI:58548"/>
        <dbReference type="EC" id="5.3.1.23"/>
    </reaction>
</comment>
<comment type="pathway">
    <text evidence="1">Amino-acid biosynthesis; L-methionine biosynthesis via salvage pathway; L-methionine from S-methyl-5-thio-alpha-D-ribose 1-phosphate: step 1/6.</text>
</comment>
<comment type="similarity">
    <text evidence="2">Belongs to the eIF-2B alpha/beta/delta subunits family. MtnA subfamily.</text>
</comment>
<accession>A8F7V1</accession>
<keyword id="KW-0028">Amino-acid biosynthesis</keyword>
<keyword id="KW-0413">Isomerase</keyword>
<keyword id="KW-0486">Methionine biosynthesis</keyword>
<keyword id="KW-1185">Reference proteome</keyword>
<name>MTNA2_PSELT</name>
<protein>
    <recommendedName>
        <fullName evidence="1">Methylthioribose-1-phosphate isomerase 2</fullName>
        <shortName evidence="1">M1Pi 2</shortName>
        <shortName evidence="1">MTR-1-P isomerase 2</shortName>
        <ecNumber evidence="1">5.3.1.23</ecNumber>
    </recommendedName>
    <alternativeName>
        <fullName evidence="1">S-methyl-5-thioribose-1-phosphate isomerase 2</fullName>
    </alternativeName>
</protein>
<organism>
    <name type="scientific">Pseudothermotoga lettingae (strain ATCC BAA-301 / DSM 14385 / NBRC 107922 / TMO)</name>
    <name type="common">Thermotoga lettingae</name>
    <dbReference type="NCBI Taxonomy" id="416591"/>
    <lineage>
        <taxon>Bacteria</taxon>
        <taxon>Thermotogati</taxon>
        <taxon>Thermotogota</taxon>
        <taxon>Thermotogae</taxon>
        <taxon>Thermotogales</taxon>
        <taxon>Thermotogaceae</taxon>
        <taxon>Pseudothermotoga</taxon>
    </lineage>
</organism>
<evidence type="ECO:0000255" key="1">
    <source>
        <dbReference type="HAMAP-Rule" id="MF_01678"/>
    </source>
</evidence>
<evidence type="ECO:0000305" key="2"/>
<proteinExistence type="inferred from homology"/>
<dbReference type="EC" id="5.3.1.23" evidence="1"/>
<dbReference type="EMBL" id="CP000812">
    <property type="protein sequence ID" value="ABV34235.1"/>
    <property type="molecule type" value="Genomic_DNA"/>
</dbReference>
<dbReference type="RefSeq" id="WP_012003711.1">
    <property type="nucleotide sequence ID" value="NC_009828.1"/>
</dbReference>
<dbReference type="SMR" id="A8F7V1"/>
<dbReference type="STRING" id="416591.Tlet_1681"/>
<dbReference type="KEGG" id="tle:Tlet_1681"/>
<dbReference type="eggNOG" id="COG0182">
    <property type="taxonomic scope" value="Bacteria"/>
</dbReference>
<dbReference type="HOGENOM" id="CLU_016218_1_2_0"/>
<dbReference type="OrthoDB" id="9803436at2"/>
<dbReference type="UniPathway" id="UPA00904">
    <property type="reaction ID" value="UER00874"/>
</dbReference>
<dbReference type="Proteomes" id="UP000002016">
    <property type="component" value="Chromosome"/>
</dbReference>
<dbReference type="GO" id="GO:0046523">
    <property type="term" value="F:S-methyl-5-thioribose-1-phosphate isomerase activity"/>
    <property type="evidence" value="ECO:0007669"/>
    <property type="project" value="UniProtKB-UniRule"/>
</dbReference>
<dbReference type="GO" id="GO:0019509">
    <property type="term" value="P:L-methionine salvage from methylthioadenosine"/>
    <property type="evidence" value="ECO:0007669"/>
    <property type="project" value="UniProtKB-UniRule"/>
</dbReference>
<dbReference type="FunFam" id="1.20.120.420:FF:000003">
    <property type="entry name" value="Methylthioribose-1-phosphate isomerase"/>
    <property type="match status" value="1"/>
</dbReference>
<dbReference type="FunFam" id="3.40.50.10470:FF:000006">
    <property type="entry name" value="Methylthioribose-1-phosphate isomerase"/>
    <property type="match status" value="1"/>
</dbReference>
<dbReference type="Gene3D" id="1.20.120.420">
    <property type="entry name" value="translation initiation factor eif-2b, domain 1"/>
    <property type="match status" value="1"/>
</dbReference>
<dbReference type="Gene3D" id="3.40.50.10470">
    <property type="entry name" value="Translation initiation factor eif-2b, domain 2"/>
    <property type="match status" value="1"/>
</dbReference>
<dbReference type="HAMAP" id="MF_01678">
    <property type="entry name" value="Salvage_MtnA"/>
    <property type="match status" value="1"/>
</dbReference>
<dbReference type="InterPro" id="IPR000649">
    <property type="entry name" value="IF-2B-related"/>
</dbReference>
<dbReference type="InterPro" id="IPR005251">
    <property type="entry name" value="IF-M1Pi"/>
</dbReference>
<dbReference type="InterPro" id="IPR042529">
    <property type="entry name" value="IF_2B-like_C"/>
</dbReference>
<dbReference type="InterPro" id="IPR011559">
    <property type="entry name" value="Initiation_fac_2B_a/b/d"/>
</dbReference>
<dbReference type="InterPro" id="IPR027363">
    <property type="entry name" value="M1Pi_N"/>
</dbReference>
<dbReference type="InterPro" id="IPR037171">
    <property type="entry name" value="NagB/RpiA_transferase-like"/>
</dbReference>
<dbReference type="NCBIfam" id="TIGR00524">
    <property type="entry name" value="eIF-2B_rel"/>
    <property type="match status" value="1"/>
</dbReference>
<dbReference type="NCBIfam" id="NF004326">
    <property type="entry name" value="PRK05720.1"/>
    <property type="match status" value="1"/>
</dbReference>
<dbReference type="NCBIfam" id="TIGR00512">
    <property type="entry name" value="salvage_mtnA"/>
    <property type="match status" value="1"/>
</dbReference>
<dbReference type="PANTHER" id="PTHR43475">
    <property type="entry name" value="METHYLTHIORIBOSE-1-PHOSPHATE ISOMERASE"/>
    <property type="match status" value="1"/>
</dbReference>
<dbReference type="PANTHER" id="PTHR43475:SF1">
    <property type="entry name" value="METHYLTHIORIBOSE-1-PHOSPHATE ISOMERASE"/>
    <property type="match status" value="1"/>
</dbReference>
<dbReference type="Pfam" id="PF01008">
    <property type="entry name" value="IF-2B"/>
    <property type="match status" value="1"/>
</dbReference>
<dbReference type="SUPFAM" id="SSF100950">
    <property type="entry name" value="NagB/RpiA/CoA transferase-like"/>
    <property type="match status" value="1"/>
</dbReference>